<accession>Q31R08</accession>
<comment type="function">
    <text evidence="1">Required for accurate and efficient protein synthesis under certain stress conditions. May act as a fidelity factor of the translation reaction, by catalyzing a one-codon backward translocation of tRNAs on improperly translocated ribosomes. Back-translocation proceeds from a post-translocation (POST) complex to a pre-translocation (PRE) complex, thus giving elongation factor G a second chance to translocate the tRNAs correctly. Binds to ribosomes in a GTP-dependent manner.</text>
</comment>
<comment type="catalytic activity">
    <reaction evidence="1">
        <text>GTP + H2O = GDP + phosphate + H(+)</text>
        <dbReference type="Rhea" id="RHEA:19669"/>
        <dbReference type="ChEBI" id="CHEBI:15377"/>
        <dbReference type="ChEBI" id="CHEBI:15378"/>
        <dbReference type="ChEBI" id="CHEBI:37565"/>
        <dbReference type="ChEBI" id="CHEBI:43474"/>
        <dbReference type="ChEBI" id="CHEBI:58189"/>
        <dbReference type="EC" id="3.6.5.n1"/>
    </reaction>
</comment>
<comment type="subcellular location">
    <subcellularLocation>
        <location evidence="1">Cell inner membrane</location>
        <topology evidence="1">Peripheral membrane protein</topology>
        <orientation evidence="1">Cytoplasmic side</orientation>
    </subcellularLocation>
</comment>
<comment type="similarity">
    <text evidence="1">Belongs to the TRAFAC class translation factor GTPase superfamily. Classic translation factor GTPase family. LepA subfamily.</text>
</comment>
<reference key="1">
    <citation type="submission" date="2005-08" db="EMBL/GenBank/DDBJ databases">
        <title>Complete sequence of chromosome 1 of Synechococcus elongatus PCC 7942.</title>
        <authorList>
            <consortium name="US DOE Joint Genome Institute"/>
            <person name="Copeland A."/>
            <person name="Lucas S."/>
            <person name="Lapidus A."/>
            <person name="Barry K."/>
            <person name="Detter J.C."/>
            <person name="Glavina T."/>
            <person name="Hammon N."/>
            <person name="Israni S."/>
            <person name="Pitluck S."/>
            <person name="Schmutz J."/>
            <person name="Larimer F."/>
            <person name="Land M."/>
            <person name="Kyrpides N."/>
            <person name="Lykidis A."/>
            <person name="Golden S."/>
            <person name="Richardson P."/>
        </authorList>
    </citation>
    <scope>NUCLEOTIDE SEQUENCE [LARGE SCALE GENOMIC DNA]</scope>
    <source>
        <strain>ATCC 33912 / PCC 7942 / FACHB-805</strain>
    </source>
</reference>
<dbReference type="EC" id="3.6.5.n1" evidence="1"/>
<dbReference type="EMBL" id="CP000100">
    <property type="protein sequence ID" value="ABB56511.1"/>
    <property type="molecule type" value="Genomic_DNA"/>
</dbReference>
<dbReference type="RefSeq" id="WP_011377593.1">
    <property type="nucleotide sequence ID" value="NZ_JACJTX010000002.1"/>
</dbReference>
<dbReference type="SMR" id="Q31R08"/>
<dbReference type="STRING" id="1140.Synpcc7942_0479"/>
<dbReference type="PaxDb" id="1140-Synpcc7942_0479"/>
<dbReference type="GeneID" id="72429302"/>
<dbReference type="KEGG" id="syf:Synpcc7942_0479"/>
<dbReference type="eggNOG" id="COG0481">
    <property type="taxonomic scope" value="Bacteria"/>
</dbReference>
<dbReference type="HOGENOM" id="CLU_009995_3_3_3"/>
<dbReference type="OrthoDB" id="580826at2"/>
<dbReference type="BioCyc" id="SYNEL:SYNPCC7942_0479-MONOMER"/>
<dbReference type="Proteomes" id="UP000889800">
    <property type="component" value="Chromosome"/>
</dbReference>
<dbReference type="GO" id="GO:0005886">
    <property type="term" value="C:plasma membrane"/>
    <property type="evidence" value="ECO:0007669"/>
    <property type="project" value="UniProtKB-SubCell"/>
</dbReference>
<dbReference type="GO" id="GO:0005525">
    <property type="term" value="F:GTP binding"/>
    <property type="evidence" value="ECO:0007669"/>
    <property type="project" value="UniProtKB-KW"/>
</dbReference>
<dbReference type="GO" id="GO:0003924">
    <property type="term" value="F:GTPase activity"/>
    <property type="evidence" value="ECO:0007669"/>
    <property type="project" value="InterPro"/>
</dbReference>
<dbReference type="GO" id="GO:0043022">
    <property type="term" value="F:ribosome binding"/>
    <property type="evidence" value="ECO:0007669"/>
    <property type="project" value="TreeGrafter"/>
</dbReference>
<dbReference type="GO" id="GO:0045727">
    <property type="term" value="P:positive regulation of translation"/>
    <property type="evidence" value="ECO:0007669"/>
    <property type="project" value="TreeGrafter"/>
</dbReference>
<dbReference type="GO" id="GO:0006412">
    <property type="term" value="P:translation"/>
    <property type="evidence" value="ECO:0007669"/>
    <property type="project" value="UniProtKB-KW"/>
</dbReference>
<dbReference type="CDD" id="cd03699">
    <property type="entry name" value="EF4_II"/>
    <property type="match status" value="1"/>
</dbReference>
<dbReference type="CDD" id="cd16260">
    <property type="entry name" value="EF4_III"/>
    <property type="match status" value="1"/>
</dbReference>
<dbReference type="CDD" id="cd01890">
    <property type="entry name" value="LepA"/>
    <property type="match status" value="1"/>
</dbReference>
<dbReference type="CDD" id="cd03709">
    <property type="entry name" value="lepA_C"/>
    <property type="match status" value="1"/>
</dbReference>
<dbReference type="FunFam" id="3.40.50.300:FF:000078">
    <property type="entry name" value="Elongation factor 4"/>
    <property type="match status" value="1"/>
</dbReference>
<dbReference type="FunFam" id="2.40.30.10:FF:000015">
    <property type="entry name" value="Translation factor GUF1, mitochondrial"/>
    <property type="match status" value="1"/>
</dbReference>
<dbReference type="FunFam" id="3.30.70.240:FF:000007">
    <property type="entry name" value="Translation factor GUF1, mitochondrial"/>
    <property type="match status" value="1"/>
</dbReference>
<dbReference type="FunFam" id="3.30.70.2570:FF:000001">
    <property type="entry name" value="Translation factor GUF1, mitochondrial"/>
    <property type="match status" value="1"/>
</dbReference>
<dbReference type="FunFam" id="3.30.70.870:FF:000004">
    <property type="entry name" value="Translation factor GUF1, mitochondrial"/>
    <property type="match status" value="1"/>
</dbReference>
<dbReference type="Gene3D" id="3.30.70.240">
    <property type="match status" value="1"/>
</dbReference>
<dbReference type="Gene3D" id="3.30.70.2570">
    <property type="entry name" value="Elongation factor 4, C-terminal domain"/>
    <property type="match status" value="1"/>
</dbReference>
<dbReference type="Gene3D" id="3.30.70.870">
    <property type="entry name" value="Elongation Factor G (Translational Gtpase), domain 3"/>
    <property type="match status" value="1"/>
</dbReference>
<dbReference type="Gene3D" id="3.40.50.300">
    <property type="entry name" value="P-loop containing nucleotide triphosphate hydrolases"/>
    <property type="match status" value="1"/>
</dbReference>
<dbReference type="Gene3D" id="2.40.30.10">
    <property type="entry name" value="Translation factors"/>
    <property type="match status" value="1"/>
</dbReference>
<dbReference type="HAMAP" id="MF_03138">
    <property type="entry name" value="GUFP"/>
    <property type="match status" value="1"/>
</dbReference>
<dbReference type="HAMAP" id="MF_00071">
    <property type="entry name" value="LepA"/>
    <property type="match status" value="1"/>
</dbReference>
<dbReference type="InterPro" id="IPR006297">
    <property type="entry name" value="EF-4"/>
</dbReference>
<dbReference type="InterPro" id="IPR035647">
    <property type="entry name" value="EFG_III/V"/>
</dbReference>
<dbReference type="InterPro" id="IPR000640">
    <property type="entry name" value="EFG_V-like"/>
</dbReference>
<dbReference type="InterPro" id="IPR004161">
    <property type="entry name" value="EFTu-like_2"/>
</dbReference>
<dbReference type="InterPro" id="IPR031157">
    <property type="entry name" value="G_TR_CS"/>
</dbReference>
<dbReference type="InterPro" id="IPR027518">
    <property type="entry name" value="GUFP"/>
</dbReference>
<dbReference type="InterPro" id="IPR038363">
    <property type="entry name" value="LepA_C_sf"/>
</dbReference>
<dbReference type="InterPro" id="IPR013842">
    <property type="entry name" value="LepA_CTD"/>
</dbReference>
<dbReference type="InterPro" id="IPR035654">
    <property type="entry name" value="LepA_IV"/>
</dbReference>
<dbReference type="InterPro" id="IPR027417">
    <property type="entry name" value="P-loop_NTPase"/>
</dbReference>
<dbReference type="InterPro" id="IPR005225">
    <property type="entry name" value="Small_GTP-bd"/>
</dbReference>
<dbReference type="InterPro" id="IPR000795">
    <property type="entry name" value="T_Tr_GTP-bd_dom"/>
</dbReference>
<dbReference type="NCBIfam" id="TIGR01393">
    <property type="entry name" value="lepA"/>
    <property type="match status" value="1"/>
</dbReference>
<dbReference type="NCBIfam" id="TIGR00231">
    <property type="entry name" value="small_GTP"/>
    <property type="match status" value="1"/>
</dbReference>
<dbReference type="PANTHER" id="PTHR43512:SF4">
    <property type="entry name" value="TRANSLATION FACTOR GUF1 HOMOLOG, CHLOROPLASTIC"/>
    <property type="match status" value="1"/>
</dbReference>
<dbReference type="PANTHER" id="PTHR43512">
    <property type="entry name" value="TRANSLATION FACTOR GUF1-RELATED"/>
    <property type="match status" value="1"/>
</dbReference>
<dbReference type="Pfam" id="PF00679">
    <property type="entry name" value="EFG_C"/>
    <property type="match status" value="1"/>
</dbReference>
<dbReference type="Pfam" id="PF00009">
    <property type="entry name" value="GTP_EFTU"/>
    <property type="match status" value="1"/>
</dbReference>
<dbReference type="Pfam" id="PF03144">
    <property type="entry name" value="GTP_EFTU_D2"/>
    <property type="match status" value="1"/>
</dbReference>
<dbReference type="Pfam" id="PF06421">
    <property type="entry name" value="LepA_C"/>
    <property type="match status" value="1"/>
</dbReference>
<dbReference type="PRINTS" id="PR00315">
    <property type="entry name" value="ELONGATNFCT"/>
</dbReference>
<dbReference type="SMART" id="SM00838">
    <property type="entry name" value="EFG_C"/>
    <property type="match status" value="1"/>
</dbReference>
<dbReference type="SUPFAM" id="SSF54980">
    <property type="entry name" value="EF-G C-terminal domain-like"/>
    <property type="match status" value="2"/>
</dbReference>
<dbReference type="SUPFAM" id="SSF52540">
    <property type="entry name" value="P-loop containing nucleoside triphosphate hydrolases"/>
    <property type="match status" value="1"/>
</dbReference>
<dbReference type="PROSITE" id="PS00301">
    <property type="entry name" value="G_TR_1"/>
    <property type="match status" value="1"/>
</dbReference>
<dbReference type="PROSITE" id="PS51722">
    <property type="entry name" value="G_TR_2"/>
    <property type="match status" value="1"/>
</dbReference>
<name>LEPA_SYNE7</name>
<organism>
    <name type="scientific">Synechococcus elongatus (strain ATCC 33912 / PCC 7942 / FACHB-805)</name>
    <name type="common">Anacystis nidulans R2</name>
    <dbReference type="NCBI Taxonomy" id="1140"/>
    <lineage>
        <taxon>Bacteria</taxon>
        <taxon>Bacillati</taxon>
        <taxon>Cyanobacteriota</taxon>
        <taxon>Cyanophyceae</taxon>
        <taxon>Synechococcales</taxon>
        <taxon>Synechococcaceae</taxon>
        <taxon>Synechococcus</taxon>
    </lineage>
</organism>
<gene>
    <name evidence="1" type="primary">lepA</name>
    <name type="ordered locus">Synpcc7942_0479</name>
</gene>
<keyword id="KW-0997">Cell inner membrane</keyword>
<keyword id="KW-1003">Cell membrane</keyword>
<keyword id="KW-0342">GTP-binding</keyword>
<keyword id="KW-0378">Hydrolase</keyword>
<keyword id="KW-0472">Membrane</keyword>
<keyword id="KW-0547">Nucleotide-binding</keyword>
<keyword id="KW-0648">Protein biosynthesis</keyword>
<keyword id="KW-1185">Reference proteome</keyword>
<protein>
    <recommendedName>
        <fullName evidence="1">Elongation factor 4</fullName>
        <shortName evidence="1">EF-4</shortName>
        <ecNumber evidence="1">3.6.5.n1</ecNumber>
    </recommendedName>
    <alternativeName>
        <fullName evidence="1">Ribosomal back-translocase LepA</fullName>
    </alternativeName>
</protein>
<evidence type="ECO:0000255" key="1">
    <source>
        <dbReference type="HAMAP-Rule" id="MF_00071"/>
    </source>
</evidence>
<sequence>MTDVSVSKIRNFCIIAHIDHGKSTLADRLLQETGTVQAREMKEQFLDNMELERERGITIKLQAARMNYRAQDGEQYVLNLIDTPGHVDFSYEVSRSLQACEGALLVVDASQGVEAQTLANVYLALENDLEIIPVLNKIDLPGADPERVKREIEEVIGLDCSGAIEASAKSGIGIGEILESIVHLVPPPSDTTGEPLRALIFDSYYDPYRGVIVYFRVIDGTVRKGDRIRLMASGKEYEIDELGVLSPNQVQVEELHAGEVGYIAASIKAVADARVGDTITLARARATEPLPGYVEAKPMVFCGLFPTDSDRYPDLRDALEKLQLSDAALQYEPETSSAMGFGFRCGFLGLLHMEIVQERLEREYNLDLITTAPSVVYQVTTLDGEVLRVDNPSKLPPPQQREKIEEPYVKVEIITPENYVGALMDLCQTRRGIFIDMKYLTQERTTLIYEMPLAEVVTDFFDQMKSRTKGYASMEYSLIGYREGELVRMDILINSEPVDPLATIVHRDKAYYVGKALVEKLKELIPRHQFKIPLQAAIGSRVIASESIPALRKDVLAKCYGGDISRKKKLLQKQAKGKKRMKAIGTVDVPQEAFMAVLKLDREG</sequence>
<feature type="chain" id="PRO_0000265719" description="Elongation factor 4">
    <location>
        <begin position="1"/>
        <end position="604"/>
    </location>
</feature>
<feature type="domain" description="tr-type G">
    <location>
        <begin position="7"/>
        <end position="189"/>
    </location>
</feature>
<feature type="binding site" evidence="1">
    <location>
        <begin position="19"/>
        <end position="24"/>
    </location>
    <ligand>
        <name>GTP</name>
        <dbReference type="ChEBI" id="CHEBI:37565"/>
    </ligand>
</feature>
<feature type="binding site" evidence="1">
    <location>
        <begin position="136"/>
        <end position="139"/>
    </location>
    <ligand>
        <name>GTP</name>
        <dbReference type="ChEBI" id="CHEBI:37565"/>
    </ligand>
</feature>
<proteinExistence type="inferred from homology"/>